<dbReference type="EC" id="2.7.7.3" evidence="1"/>
<dbReference type="EMBL" id="CP000970">
    <property type="protein sequence ID" value="ACB18419.1"/>
    <property type="molecule type" value="Genomic_DNA"/>
</dbReference>
<dbReference type="RefSeq" id="WP_001171866.1">
    <property type="nucleotide sequence ID" value="NC_010498.1"/>
</dbReference>
<dbReference type="SMR" id="B1LK71"/>
<dbReference type="GeneID" id="75202203"/>
<dbReference type="KEGG" id="ecm:EcSMS35_3969"/>
<dbReference type="HOGENOM" id="CLU_100149_0_1_6"/>
<dbReference type="UniPathway" id="UPA00241">
    <property type="reaction ID" value="UER00355"/>
</dbReference>
<dbReference type="Proteomes" id="UP000007011">
    <property type="component" value="Chromosome"/>
</dbReference>
<dbReference type="GO" id="GO:0005737">
    <property type="term" value="C:cytoplasm"/>
    <property type="evidence" value="ECO:0007669"/>
    <property type="project" value="UniProtKB-SubCell"/>
</dbReference>
<dbReference type="GO" id="GO:0005524">
    <property type="term" value="F:ATP binding"/>
    <property type="evidence" value="ECO:0007669"/>
    <property type="project" value="UniProtKB-KW"/>
</dbReference>
<dbReference type="GO" id="GO:0004595">
    <property type="term" value="F:pantetheine-phosphate adenylyltransferase activity"/>
    <property type="evidence" value="ECO:0007669"/>
    <property type="project" value="UniProtKB-UniRule"/>
</dbReference>
<dbReference type="GO" id="GO:0015937">
    <property type="term" value="P:coenzyme A biosynthetic process"/>
    <property type="evidence" value="ECO:0007669"/>
    <property type="project" value="UniProtKB-UniRule"/>
</dbReference>
<dbReference type="CDD" id="cd02163">
    <property type="entry name" value="PPAT"/>
    <property type="match status" value="1"/>
</dbReference>
<dbReference type="FunFam" id="3.40.50.620:FF:000012">
    <property type="entry name" value="Phosphopantetheine adenylyltransferase"/>
    <property type="match status" value="1"/>
</dbReference>
<dbReference type="Gene3D" id="3.40.50.620">
    <property type="entry name" value="HUPs"/>
    <property type="match status" value="1"/>
</dbReference>
<dbReference type="HAMAP" id="MF_00151">
    <property type="entry name" value="PPAT_bact"/>
    <property type="match status" value="1"/>
</dbReference>
<dbReference type="InterPro" id="IPR004821">
    <property type="entry name" value="Cyt_trans-like"/>
</dbReference>
<dbReference type="InterPro" id="IPR001980">
    <property type="entry name" value="PPAT"/>
</dbReference>
<dbReference type="InterPro" id="IPR014729">
    <property type="entry name" value="Rossmann-like_a/b/a_fold"/>
</dbReference>
<dbReference type="NCBIfam" id="TIGR01510">
    <property type="entry name" value="coaD_prev_kdtB"/>
    <property type="match status" value="1"/>
</dbReference>
<dbReference type="NCBIfam" id="TIGR00125">
    <property type="entry name" value="cyt_tran_rel"/>
    <property type="match status" value="1"/>
</dbReference>
<dbReference type="PANTHER" id="PTHR21342">
    <property type="entry name" value="PHOSPHOPANTETHEINE ADENYLYLTRANSFERASE"/>
    <property type="match status" value="1"/>
</dbReference>
<dbReference type="PANTHER" id="PTHR21342:SF1">
    <property type="entry name" value="PHOSPHOPANTETHEINE ADENYLYLTRANSFERASE"/>
    <property type="match status" value="1"/>
</dbReference>
<dbReference type="Pfam" id="PF01467">
    <property type="entry name" value="CTP_transf_like"/>
    <property type="match status" value="1"/>
</dbReference>
<dbReference type="PRINTS" id="PR01020">
    <property type="entry name" value="LPSBIOSNTHSS"/>
</dbReference>
<dbReference type="SUPFAM" id="SSF52374">
    <property type="entry name" value="Nucleotidylyl transferase"/>
    <property type="match status" value="1"/>
</dbReference>
<name>COAD_ECOSM</name>
<accession>B1LK71</accession>
<keyword id="KW-0067">ATP-binding</keyword>
<keyword id="KW-0173">Coenzyme A biosynthesis</keyword>
<keyword id="KW-0963">Cytoplasm</keyword>
<keyword id="KW-0460">Magnesium</keyword>
<keyword id="KW-0547">Nucleotide-binding</keyword>
<keyword id="KW-0548">Nucleotidyltransferase</keyword>
<keyword id="KW-0808">Transferase</keyword>
<protein>
    <recommendedName>
        <fullName evidence="1">Phosphopantetheine adenylyltransferase</fullName>
        <ecNumber evidence="1">2.7.7.3</ecNumber>
    </recommendedName>
    <alternativeName>
        <fullName evidence="1">Dephospho-CoA pyrophosphorylase</fullName>
    </alternativeName>
    <alternativeName>
        <fullName evidence="1">Pantetheine-phosphate adenylyltransferase</fullName>
        <shortName evidence="1">PPAT</shortName>
    </alternativeName>
</protein>
<feature type="chain" id="PRO_1000118080" description="Phosphopantetheine adenylyltransferase">
    <location>
        <begin position="1"/>
        <end position="159"/>
    </location>
</feature>
<feature type="binding site" evidence="1">
    <location>
        <begin position="10"/>
        <end position="11"/>
    </location>
    <ligand>
        <name>ATP</name>
        <dbReference type="ChEBI" id="CHEBI:30616"/>
    </ligand>
</feature>
<feature type="binding site" evidence="1">
    <location>
        <position position="10"/>
    </location>
    <ligand>
        <name>substrate</name>
    </ligand>
</feature>
<feature type="binding site" evidence="1">
    <location>
        <position position="18"/>
    </location>
    <ligand>
        <name>ATP</name>
        <dbReference type="ChEBI" id="CHEBI:30616"/>
    </ligand>
</feature>
<feature type="binding site" evidence="1">
    <location>
        <position position="42"/>
    </location>
    <ligand>
        <name>substrate</name>
    </ligand>
</feature>
<feature type="binding site" evidence="1">
    <location>
        <position position="74"/>
    </location>
    <ligand>
        <name>substrate</name>
    </ligand>
</feature>
<feature type="binding site" evidence="1">
    <location>
        <position position="88"/>
    </location>
    <ligand>
        <name>substrate</name>
    </ligand>
</feature>
<feature type="binding site" evidence="1">
    <location>
        <begin position="89"/>
        <end position="91"/>
    </location>
    <ligand>
        <name>ATP</name>
        <dbReference type="ChEBI" id="CHEBI:30616"/>
    </ligand>
</feature>
<feature type="binding site" evidence="1">
    <location>
        <position position="99"/>
    </location>
    <ligand>
        <name>ATP</name>
        <dbReference type="ChEBI" id="CHEBI:30616"/>
    </ligand>
</feature>
<feature type="binding site" evidence="1">
    <location>
        <begin position="124"/>
        <end position="130"/>
    </location>
    <ligand>
        <name>ATP</name>
        <dbReference type="ChEBI" id="CHEBI:30616"/>
    </ligand>
</feature>
<feature type="site" description="Transition state stabilizer" evidence="1">
    <location>
        <position position="18"/>
    </location>
</feature>
<organism>
    <name type="scientific">Escherichia coli (strain SMS-3-5 / SECEC)</name>
    <dbReference type="NCBI Taxonomy" id="439855"/>
    <lineage>
        <taxon>Bacteria</taxon>
        <taxon>Pseudomonadati</taxon>
        <taxon>Pseudomonadota</taxon>
        <taxon>Gammaproteobacteria</taxon>
        <taxon>Enterobacterales</taxon>
        <taxon>Enterobacteriaceae</taxon>
        <taxon>Escherichia</taxon>
    </lineage>
</organism>
<proteinExistence type="inferred from homology"/>
<evidence type="ECO:0000255" key="1">
    <source>
        <dbReference type="HAMAP-Rule" id="MF_00151"/>
    </source>
</evidence>
<reference key="1">
    <citation type="journal article" date="2008" name="J. Bacteriol.">
        <title>Insights into the environmental resistance gene pool from the genome sequence of the multidrug-resistant environmental isolate Escherichia coli SMS-3-5.</title>
        <authorList>
            <person name="Fricke W.F."/>
            <person name="Wright M.S."/>
            <person name="Lindell A.H."/>
            <person name="Harkins D.M."/>
            <person name="Baker-Austin C."/>
            <person name="Ravel J."/>
            <person name="Stepanauskas R."/>
        </authorList>
    </citation>
    <scope>NUCLEOTIDE SEQUENCE [LARGE SCALE GENOMIC DNA]</scope>
    <source>
        <strain>SMS-3-5 / SECEC</strain>
    </source>
</reference>
<sequence>MQKRAIYPGTFDPITNGHIDIVTRATQMFDHVILAIAASPSKKPMFTLEERVALAQQATAHLGNVEVVGFSDLMANFARNQHATVLIRGLRAVADFEYEMQLAHMNRHLMPELESVFLMPSKEWSFISSSLVKEVARHQGDVTHFLPENVHQALMAKLA</sequence>
<gene>
    <name evidence="1" type="primary">coaD</name>
    <name type="ordered locus">EcSMS35_3969</name>
</gene>
<comment type="function">
    <text evidence="1">Reversibly transfers an adenylyl group from ATP to 4'-phosphopantetheine, yielding dephospho-CoA (dPCoA) and pyrophosphate.</text>
</comment>
<comment type="catalytic activity">
    <reaction evidence="1">
        <text>(R)-4'-phosphopantetheine + ATP + H(+) = 3'-dephospho-CoA + diphosphate</text>
        <dbReference type="Rhea" id="RHEA:19801"/>
        <dbReference type="ChEBI" id="CHEBI:15378"/>
        <dbReference type="ChEBI" id="CHEBI:30616"/>
        <dbReference type="ChEBI" id="CHEBI:33019"/>
        <dbReference type="ChEBI" id="CHEBI:57328"/>
        <dbReference type="ChEBI" id="CHEBI:61723"/>
        <dbReference type="EC" id="2.7.7.3"/>
    </reaction>
</comment>
<comment type="cofactor">
    <cofactor evidence="1">
        <name>Mg(2+)</name>
        <dbReference type="ChEBI" id="CHEBI:18420"/>
    </cofactor>
</comment>
<comment type="pathway">
    <text evidence="1">Cofactor biosynthesis; coenzyme A biosynthesis; CoA from (R)-pantothenate: step 4/5.</text>
</comment>
<comment type="subunit">
    <text evidence="1">Homohexamer.</text>
</comment>
<comment type="subcellular location">
    <subcellularLocation>
        <location evidence="1">Cytoplasm</location>
    </subcellularLocation>
</comment>
<comment type="similarity">
    <text evidence="1">Belongs to the bacterial CoaD family.</text>
</comment>